<feature type="chain" id="PRO_0000186500" description="PTS system fructose-like EIIA component">
    <location>
        <begin position="1"/>
        <end position="148"/>
    </location>
</feature>
<feature type="domain" description="PTS EIIA type-2" evidence="1">
    <location>
        <begin position="2"/>
        <end position="145"/>
    </location>
</feature>
<feature type="active site" description="Tele-phosphohistidine intermediate" evidence="1">
    <location>
        <position position="64"/>
    </location>
</feature>
<feature type="modified residue" description="Phosphohistidine; by HPr" evidence="3">
    <location>
        <position position="64"/>
    </location>
</feature>
<feature type="sequence conflict" description="In Ref. 2; AAB03033." evidence="3" ref="2">
    <original>A</original>
    <variation>G</variation>
    <location>
        <position position="81"/>
    </location>
</feature>
<protein>
    <recommendedName>
        <fullName evidence="4">PTS system fructose-like EIIA component</fullName>
    </recommendedName>
    <alternativeName>
        <fullName evidence="4">Fructose-like phosphotransferase enzyme IIA component</fullName>
    </alternativeName>
</protein>
<sequence length="148" mass="16094">MAALTASCIDLNIQGNGAYSVLKQLATIALQNGFITDSHQFLQTLLLREKMHSTGFGSGVAVPHGKSACVKQPFVLFARKAQAIDWKASDGEDVNCWICLGVPQSGEEDQVKIIGTLCRKIIHKEFIHQLQQGDTDQVLALLNQTLSS</sequence>
<evidence type="ECO:0000255" key="1">
    <source>
        <dbReference type="PROSITE-ProRule" id="PRU00417"/>
    </source>
</evidence>
<evidence type="ECO:0000303" key="2">
    <source>
    </source>
</evidence>
<evidence type="ECO:0000305" key="3"/>
<evidence type="ECO:0000305" key="4">
    <source>
    </source>
</evidence>
<gene>
    <name evidence="2" type="primary">frvA</name>
    <name type="synonym">yiiK</name>
    <name type="ordered locus">b3900</name>
    <name type="ordered locus">JW3871</name>
</gene>
<reference key="1">
    <citation type="journal article" date="1993" name="J. Bacteriol.">
        <title>Sequencing and characterization of a gene cluster encoding the enzymes for L-rhamnose metabolism in Escherichia coli.</title>
        <authorList>
            <person name="Moralejo P."/>
            <person name="Egan S.M."/>
            <person name="Hidalgo E.F."/>
            <person name="Aguilar J."/>
        </authorList>
    </citation>
    <scope>NUCLEOTIDE SEQUENCE [GENOMIC DNA]</scope>
    <source>
        <strain>K12</strain>
    </source>
</reference>
<reference key="2">
    <citation type="journal article" date="1993" name="Nucleic Acids Res.">
        <title>Analysis of the Escherichia coli genome. III. DNA sequence of the region from 87.2 to 89.2 minutes.</title>
        <authorList>
            <person name="Plunkett G. III"/>
            <person name="Burland V."/>
            <person name="Daniels D.L."/>
            <person name="Blattner F.R."/>
        </authorList>
    </citation>
    <scope>NUCLEOTIDE SEQUENCE [LARGE SCALE GENOMIC DNA]</scope>
    <source>
        <strain>K12 / MG1655 / ATCC 47076</strain>
    </source>
</reference>
<reference key="3">
    <citation type="journal article" date="1997" name="Science">
        <title>The complete genome sequence of Escherichia coli K-12.</title>
        <authorList>
            <person name="Blattner F.R."/>
            <person name="Plunkett G. III"/>
            <person name="Bloch C.A."/>
            <person name="Perna N.T."/>
            <person name="Burland V."/>
            <person name="Riley M."/>
            <person name="Collado-Vides J."/>
            <person name="Glasner J.D."/>
            <person name="Rode C.K."/>
            <person name="Mayhew G.F."/>
            <person name="Gregor J."/>
            <person name="Davis N.W."/>
            <person name="Kirkpatrick H.A."/>
            <person name="Goeden M.A."/>
            <person name="Rose D.J."/>
            <person name="Mau B."/>
            <person name="Shao Y."/>
        </authorList>
    </citation>
    <scope>NUCLEOTIDE SEQUENCE [LARGE SCALE GENOMIC DNA]</scope>
    <scope>SEQUENCE REVISION TO 81 AND 104-108</scope>
    <source>
        <strain>K12 / MG1655 / ATCC 47076</strain>
    </source>
</reference>
<reference key="4">
    <citation type="journal article" date="2006" name="Mol. Syst. Biol.">
        <title>Highly accurate genome sequences of Escherichia coli K-12 strains MG1655 and W3110.</title>
        <authorList>
            <person name="Hayashi K."/>
            <person name="Morooka N."/>
            <person name="Yamamoto Y."/>
            <person name="Fujita K."/>
            <person name="Isono K."/>
            <person name="Choi S."/>
            <person name="Ohtsubo E."/>
            <person name="Baba T."/>
            <person name="Wanner B.L."/>
            <person name="Mori H."/>
            <person name="Horiuchi T."/>
        </authorList>
    </citation>
    <scope>NUCLEOTIDE SEQUENCE [LARGE SCALE GENOMIC DNA]</scope>
    <source>
        <strain>K12 / W3110 / ATCC 27325 / DSM 5911</strain>
    </source>
</reference>
<reference key="5">
    <citation type="journal article" date="1994" name="Protein Sci.">
        <title>Novel phosphotransferase system genes revealed by bacterial genome analysis: unique, putative fructose- and glucoside-specific systems.</title>
        <authorList>
            <person name="Reizer J."/>
            <person name="Michotey V."/>
            <person name="Reizer A."/>
            <person name="Saier M.H. Jr."/>
        </authorList>
    </citation>
    <scope>FUNCTION</scope>
    <scope>DISCUSSION OF SEQUENCE</scope>
</reference>
<dbReference type="EMBL" id="X60472">
    <property type="protein sequence ID" value="CAA43004.1"/>
    <property type="molecule type" value="Genomic_DNA"/>
</dbReference>
<dbReference type="EMBL" id="L19201">
    <property type="protein sequence ID" value="AAB03033.2"/>
    <property type="molecule type" value="Genomic_DNA"/>
</dbReference>
<dbReference type="EMBL" id="U00096">
    <property type="protein sequence ID" value="AAC76882.1"/>
    <property type="molecule type" value="Genomic_DNA"/>
</dbReference>
<dbReference type="EMBL" id="AP009048">
    <property type="protein sequence ID" value="BAE77409.1"/>
    <property type="molecule type" value="Genomic_DNA"/>
</dbReference>
<dbReference type="PIR" id="D48649">
    <property type="entry name" value="D48649"/>
</dbReference>
<dbReference type="RefSeq" id="NP_418336.1">
    <property type="nucleotide sequence ID" value="NC_000913.3"/>
</dbReference>
<dbReference type="RefSeq" id="WP_000729595.1">
    <property type="nucleotide sequence ID" value="NZ_SSZK01000026.1"/>
</dbReference>
<dbReference type="SMR" id="P32155"/>
<dbReference type="BioGRID" id="4261599">
    <property type="interactions" value="8"/>
</dbReference>
<dbReference type="ComplexPortal" id="CPX-5979">
    <property type="entry name" value="Frv fructose-like enzyme II complex"/>
</dbReference>
<dbReference type="FunCoup" id="P32155">
    <property type="interactions" value="74"/>
</dbReference>
<dbReference type="IntAct" id="P32155">
    <property type="interactions" value="1"/>
</dbReference>
<dbReference type="STRING" id="511145.b3900"/>
<dbReference type="TCDB" id="4.A.2.1.25">
    <property type="family name" value="the pts fructose-mannitol (fru) family"/>
</dbReference>
<dbReference type="PaxDb" id="511145-b3900"/>
<dbReference type="EnsemblBacteria" id="AAC76882">
    <property type="protein sequence ID" value="AAC76882"/>
    <property type="gene ID" value="b3900"/>
</dbReference>
<dbReference type="GeneID" id="948391"/>
<dbReference type="KEGG" id="ecj:JW3871"/>
<dbReference type="KEGG" id="eco:b3900"/>
<dbReference type="PATRIC" id="fig|1411691.4.peg.2807"/>
<dbReference type="EchoBASE" id="EB1810"/>
<dbReference type="eggNOG" id="COG1762">
    <property type="taxonomic scope" value="Bacteria"/>
</dbReference>
<dbReference type="HOGENOM" id="CLU_072531_5_1_6"/>
<dbReference type="InParanoid" id="P32155"/>
<dbReference type="OMA" id="PIECSFI"/>
<dbReference type="PhylomeDB" id="P32155"/>
<dbReference type="BioCyc" id="EcoCyc:FRVA-MONOMER"/>
<dbReference type="BioCyc" id="MetaCyc:FRVA-MONOMER"/>
<dbReference type="PRO" id="PR:P32155"/>
<dbReference type="Proteomes" id="UP000000625">
    <property type="component" value="Chromosome"/>
</dbReference>
<dbReference type="GO" id="GO:0005737">
    <property type="term" value="C:cytoplasm"/>
    <property type="evidence" value="ECO:0007669"/>
    <property type="project" value="UniProtKB-SubCell"/>
</dbReference>
<dbReference type="GO" id="GO:1902495">
    <property type="term" value="C:transmembrane transporter complex"/>
    <property type="evidence" value="ECO:0000303"/>
    <property type="project" value="ComplexPortal"/>
</dbReference>
<dbReference type="GO" id="GO:0016301">
    <property type="term" value="F:kinase activity"/>
    <property type="evidence" value="ECO:0007669"/>
    <property type="project" value="UniProtKB-KW"/>
</dbReference>
<dbReference type="GO" id="GO:0008982">
    <property type="term" value="F:protein-N(PI)-phosphohistidine-sugar phosphotransferase activity"/>
    <property type="evidence" value="ECO:0007669"/>
    <property type="project" value="InterPro"/>
</dbReference>
<dbReference type="GO" id="GO:1990539">
    <property type="term" value="P:fructose import across plasma membrane"/>
    <property type="evidence" value="ECO:0000303"/>
    <property type="project" value="ComplexPortal"/>
</dbReference>
<dbReference type="GO" id="GO:0009401">
    <property type="term" value="P:phosphoenolpyruvate-dependent sugar phosphotransferase system"/>
    <property type="evidence" value="ECO:0000247"/>
    <property type="project" value="EcoCyc"/>
</dbReference>
<dbReference type="CDD" id="cd00211">
    <property type="entry name" value="PTS_IIA_fru"/>
    <property type="match status" value="1"/>
</dbReference>
<dbReference type="FunFam" id="3.40.930.10:FF:000014">
    <property type="entry name" value="PTS system fructose-specific IIA component"/>
    <property type="match status" value="1"/>
</dbReference>
<dbReference type="Gene3D" id="3.40.930.10">
    <property type="entry name" value="Mannitol-specific EII, Chain A"/>
    <property type="match status" value="1"/>
</dbReference>
<dbReference type="InterPro" id="IPR016152">
    <property type="entry name" value="PTrfase/Anion_transptr"/>
</dbReference>
<dbReference type="InterPro" id="IPR002178">
    <property type="entry name" value="PTS_EIIA_type-2_dom"/>
</dbReference>
<dbReference type="InterPro" id="IPR004715">
    <property type="entry name" value="PTS_IIA_fruc"/>
</dbReference>
<dbReference type="InterPro" id="IPR051541">
    <property type="entry name" value="PTS_SugarTrans_NitroReg"/>
</dbReference>
<dbReference type="NCBIfam" id="TIGR00848">
    <property type="entry name" value="fruA"/>
    <property type="match status" value="1"/>
</dbReference>
<dbReference type="NCBIfam" id="NF007389">
    <property type="entry name" value="PRK09913.1"/>
    <property type="match status" value="1"/>
</dbReference>
<dbReference type="PANTHER" id="PTHR47738:SF2">
    <property type="entry name" value="PTS SYSTEM FRUCTOSE-LIKE EIIA COMPONENT"/>
    <property type="match status" value="1"/>
</dbReference>
<dbReference type="PANTHER" id="PTHR47738">
    <property type="entry name" value="PTS SYSTEM FRUCTOSE-LIKE EIIA COMPONENT-RELATED"/>
    <property type="match status" value="1"/>
</dbReference>
<dbReference type="Pfam" id="PF00359">
    <property type="entry name" value="PTS_EIIA_2"/>
    <property type="match status" value="1"/>
</dbReference>
<dbReference type="SUPFAM" id="SSF55804">
    <property type="entry name" value="Phoshotransferase/anion transport protein"/>
    <property type="match status" value="1"/>
</dbReference>
<dbReference type="PROSITE" id="PS51094">
    <property type="entry name" value="PTS_EIIA_TYPE_2"/>
    <property type="match status" value="1"/>
</dbReference>
<dbReference type="PROSITE" id="PS00372">
    <property type="entry name" value="PTS_EIIA_TYPE_2_HIS"/>
    <property type="match status" value="1"/>
</dbReference>
<name>PTFLA_ECOLI</name>
<proteinExistence type="inferred from homology"/>
<keyword id="KW-0963">Cytoplasm</keyword>
<keyword id="KW-0418">Kinase</keyword>
<keyword id="KW-0597">Phosphoprotein</keyword>
<keyword id="KW-0598">Phosphotransferase system</keyword>
<keyword id="KW-1185">Reference proteome</keyword>
<keyword id="KW-0762">Sugar transport</keyword>
<keyword id="KW-0808">Transferase</keyword>
<keyword id="KW-0813">Transport</keyword>
<accession>P32155</accession>
<accession>P76776</accession>
<accession>Q2M8J7</accession>
<comment type="function">
    <text evidence="4">The phosphoenolpyruvate-dependent sugar phosphotransferase system (sugar PTS), a major carbohydrate active transport system, catalyzes the phosphorylation of incoming sugar substrates concomitantly with their translocation across the cell membrane. The enzyme II FrvAB PTS system is involved in fructose transport.</text>
</comment>
<comment type="subcellular location">
    <subcellularLocation>
        <location evidence="3">Cytoplasm</location>
    </subcellularLocation>
</comment>
<comment type="domain">
    <text evidence="1">The PTS EIIA type-2 domain is phosphorylated by phospho-HPr on a histidyl residue. Then, it transfers the phosphoryl group to the PTS EIIB type-2 domain.</text>
</comment>
<organism>
    <name type="scientific">Escherichia coli (strain K12)</name>
    <dbReference type="NCBI Taxonomy" id="83333"/>
    <lineage>
        <taxon>Bacteria</taxon>
        <taxon>Pseudomonadati</taxon>
        <taxon>Pseudomonadota</taxon>
        <taxon>Gammaproteobacteria</taxon>
        <taxon>Enterobacterales</taxon>
        <taxon>Enterobacteriaceae</taxon>
        <taxon>Escherichia</taxon>
    </lineage>
</organism>